<name>LBPA_NEIMA</name>
<dbReference type="EMBL" id="AL157959">
    <property type="protein sequence ID" value="CAM08867.1"/>
    <property type="molecule type" value="Genomic_DNA"/>
</dbReference>
<dbReference type="PIR" id="C81798">
    <property type="entry name" value="C81798"/>
</dbReference>
<dbReference type="RefSeq" id="WP_002247017.1">
    <property type="nucleotide sequence ID" value="NC_003116.1"/>
</dbReference>
<dbReference type="SMR" id="Q9JTK4"/>
<dbReference type="EnsemblBacteria" id="CAM08867">
    <property type="protein sequence ID" value="CAM08867"/>
    <property type="gene ID" value="NMA1739"/>
</dbReference>
<dbReference type="KEGG" id="nma:NMA1739"/>
<dbReference type="HOGENOM" id="CLU_008287_19_0_4"/>
<dbReference type="Proteomes" id="UP000000626">
    <property type="component" value="Chromosome"/>
</dbReference>
<dbReference type="GO" id="GO:0009279">
    <property type="term" value="C:cell outer membrane"/>
    <property type="evidence" value="ECO:0007669"/>
    <property type="project" value="UniProtKB-SubCell"/>
</dbReference>
<dbReference type="GO" id="GO:0015091">
    <property type="term" value="F:ferric iron transmembrane transporter activity"/>
    <property type="evidence" value="ECO:0007669"/>
    <property type="project" value="InterPro"/>
</dbReference>
<dbReference type="GO" id="GO:0015344">
    <property type="term" value="F:siderophore uptake transmembrane transporter activity"/>
    <property type="evidence" value="ECO:0007669"/>
    <property type="project" value="TreeGrafter"/>
</dbReference>
<dbReference type="CDD" id="cd01347">
    <property type="entry name" value="ligand_gated_channel"/>
    <property type="match status" value="1"/>
</dbReference>
<dbReference type="Gene3D" id="2.40.170.20">
    <property type="entry name" value="TonB-dependent receptor, beta-barrel domain"/>
    <property type="match status" value="1"/>
</dbReference>
<dbReference type="Gene3D" id="2.170.130.10">
    <property type="entry name" value="TonB-dependent receptor, plug domain"/>
    <property type="match status" value="1"/>
</dbReference>
<dbReference type="InterPro" id="IPR012910">
    <property type="entry name" value="Plug_dom"/>
</dbReference>
<dbReference type="InterPro" id="IPR037066">
    <property type="entry name" value="Plug_dom_sf"/>
</dbReference>
<dbReference type="InterPro" id="IPR039426">
    <property type="entry name" value="TonB-dep_rcpt-like"/>
</dbReference>
<dbReference type="InterPro" id="IPR000531">
    <property type="entry name" value="TonB-dep_rcpt_b-brl"/>
</dbReference>
<dbReference type="InterPro" id="IPR010949">
    <property type="entry name" value="TonB_Hb/transfer/lactofer_rcpt"/>
</dbReference>
<dbReference type="InterPro" id="IPR010948">
    <property type="entry name" value="TonB_lacto/transferrin_rcpt"/>
</dbReference>
<dbReference type="InterPro" id="IPR036942">
    <property type="entry name" value="TonB_rcpt_b-brl_sf"/>
</dbReference>
<dbReference type="InterPro" id="IPR010917">
    <property type="entry name" value="TonB_rcpt_CS"/>
</dbReference>
<dbReference type="NCBIfam" id="TIGR01786">
    <property type="entry name" value="TonB-hemlactrns"/>
    <property type="match status" value="1"/>
</dbReference>
<dbReference type="NCBIfam" id="TIGR01776">
    <property type="entry name" value="TonB-tbp-lbp"/>
    <property type="match status" value="1"/>
</dbReference>
<dbReference type="PANTHER" id="PTHR30069">
    <property type="entry name" value="TONB-DEPENDENT OUTER MEMBRANE RECEPTOR"/>
    <property type="match status" value="1"/>
</dbReference>
<dbReference type="PANTHER" id="PTHR30069:SF54">
    <property type="entry name" value="TRANSFERRIN-BINDING PROTEIN A"/>
    <property type="match status" value="1"/>
</dbReference>
<dbReference type="Pfam" id="PF07715">
    <property type="entry name" value="Plug"/>
    <property type="match status" value="1"/>
</dbReference>
<dbReference type="Pfam" id="PF00593">
    <property type="entry name" value="TonB_dep_Rec_b-barrel"/>
    <property type="match status" value="1"/>
</dbReference>
<dbReference type="SUPFAM" id="SSF56935">
    <property type="entry name" value="Porins"/>
    <property type="match status" value="1"/>
</dbReference>
<dbReference type="PROSITE" id="PS01156">
    <property type="entry name" value="TONB_DEPENDENT_REC_2"/>
    <property type="match status" value="1"/>
</dbReference>
<dbReference type="PROSITE" id="PS52016">
    <property type="entry name" value="TONB_DEPENDENT_REC_3"/>
    <property type="match status" value="1"/>
</dbReference>
<organism>
    <name type="scientific">Neisseria meningitidis serogroup A / serotype 4A (strain DSM 15465 / Z2491)</name>
    <dbReference type="NCBI Taxonomy" id="122587"/>
    <lineage>
        <taxon>Bacteria</taxon>
        <taxon>Pseudomonadati</taxon>
        <taxon>Pseudomonadota</taxon>
        <taxon>Betaproteobacteria</taxon>
        <taxon>Neisseriales</taxon>
        <taxon>Neisseriaceae</taxon>
        <taxon>Neisseria</taxon>
    </lineage>
</organism>
<sequence>MNKKHGFSLTLTALAIAAAFPSYAANPETAASDAAQSQSLKEITVRAAKVGRRSKEATGLGKIVKTSETLNKEQVLGIRDLTRYDPGVAVVEQGNGASGGYSIRGVDKNRVAVSVDGVAQIQAFTVQGSLSGYGGRGGSGAINEIEYENISTVEIDKGAGSSDHGSGALGGAVAFRTKEAADLISDGKSWGIQAKTAYGSKNRQFMKSLGAGFSKDGWEGLLIRTERQGRETRPHGDIADGVEYGIDRLDAFRQTYDIQKQNKKAEYFLAEGEREPKPVAKLAGNGNYLKNQLNRWVEERKKNNQPLNAEEEAMVREAQARHENLSAQSYTGGGRILPDPMDYRSGSWLAKLGYRFGGRHYVGGVFEDTKQRYDIRDMTEKQYYGTDEAKKFSNKSGVYDGNDFRDGLYFVPNIEEWKGDTNLVKGIGLKYSRTKFIDEHHRRRRMGLLYRYENEAYSDNWADKAVLSFDKQGVATDNNTLKLNCAVYPAVDKSCRASADKPYSYDSSDRFHYREQHNVLNASFEKSLKNKWTKHHLTLGFGYDASKAISRPEQLSHNAARISESTGFDDNNQDKYLLGKPEVVEGSVCGYIETLRSRKCVPRKINGSNIHISLNDRFSIGKYFDFSLGGRYDRQNFTTSEELVRSGRYVDRSWNSGIVFKPNRHFSVSYRASSGFRTPSFQELFGIDIYHDYPKGWQRPALKSEKAANREIGLQWKGDFGFLEISSFRNRYTDMIAVADHKTQLPDSTGRLTEIDIRDYYNAQNMSLQGVNILGKIDWNGVYGKLPEGLYTTLAYNRIKPKSVSNRPDLSLRSYALDAVQPSRYVLGFGYDQPEGKWGANIMLTYSKGKNPDELAYLAGDQKRYSTKRASSSWSTADVSAYLNLKKRLTLRAAIYNIGNYRYVTWESLRQTAESTANRHGGDSNYGRYAAPGRNFSLALEMKF</sequence>
<proteinExistence type="inferred from homology"/>
<feature type="signal peptide" evidence="1">
    <location>
        <begin position="1"/>
        <end position="27"/>
    </location>
</feature>
<feature type="chain" id="PRO_0000034765" description="Lactoferrin-binding protein A">
    <location>
        <begin position="28"/>
        <end position="944"/>
    </location>
</feature>
<feature type="domain" description="TBDR plug" evidence="2">
    <location>
        <begin position="52"/>
        <end position="178"/>
    </location>
</feature>
<feature type="domain" description="TBDR beta-barrel" evidence="2">
    <location>
        <begin position="189"/>
        <end position="944"/>
    </location>
</feature>
<feature type="short sequence motif" description="TonB C-terminal box">
    <location>
        <begin position="927"/>
        <end position="944"/>
    </location>
</feature>
<gene>
    <name type="primary">lbpA</name>
    <name type="ordered locus">NMA1739</name>
</gene>
<accession>Q9JTK4</accession>
<accession>A1ISV5</accession>
<reference key="1">
    <citation type="journal article" date="2000" name="Nature">
        <title>Complete DNA sequence of a serogroup A strain of Neisseria meningitidis Z2491.</title>
        <authorList>
            <person name="Parkhill J."/>
            <person name="Achtman M."/>
            <person name="James K.D."/>
            <person name="Bentley S.D."/>
            <person name="Churcher C.M."/>
            <person name="Klee S.R."/>
            <person name="Morelli G."/>
            <person name="Basham D."/>
            <person name="Brown D."/>
            <person name="Chillingworth T."/>
            <person name="Davies R.M."/>
            <person name="Davis P."/>
            <person name="Devlin K."/>
            <person name="Feltwell T."/>
            <person name="Hamlin N."/>
            <person name="Holroyd S."/>
            <person name="Jagels K."/>
            <person name="Leather S."/>
            <person name="Moule S."/>
            <person name="Mungall K.L."/>
            <person name="Quail M.A."/>
            <person name="Rajandream M.A."/>
            <person name="Rutherford K.M."/>
            <person name="Simmonds M."/>
            <person name="Skelton J."/>
            <person name="Whitehead S."/>
            <person name="Spratt B.G."/>
            <person name="Barrell B.G."/>
        </authorList>
    </citation>
    <scope>NUCLEOTIDE SEQUENCE [LARGE SCALE GENOMIC DNA]</scope>
    <source>
        <strain>DSM 15465 / Z2491</strain>
    </source>
</reference>
<comment type="function">
    <text>Unknown. May be an iron-siderophore receptor.</text>
</comment>
<comment type="subcellular location">
    <subcellularLocation>
        <location evidence="2">Cell outer membrane</location>
        <topology evidence="2">Multi-pass membrane protein</topology>
    </subcellularLocation>
</comment>
<comment type="similarity">
    <text evidence="3">Belongs to the TonB-dependent receptor family.</text>
</comment>
<evidence type="ECO:0000255" key="1"/>
<evidence type="ECO:0000255" key="2">
    <source>
        <dbReference type="PROSITE-ProRule" id="PRU01360"/>
    </source>
</evidence>
<evidence type="ECO:0000305" key="3"/>
<protein>
    <recommendedName>
        <fullName>Lactoferrin-binding protein A</fullName>
    </recommendedName>
</protein>
<keyword id="KW-0998">Cell outer membrane</keyword>
<keyword id="KW-0406">Ion transport</keyword>
<keyword id="KW-0408">Iron</keyword>
<keyword id="KW-0410">Iron transport</keyword>
<keyword id="KW-0472">Membrane</keyword>
<keyword id="KW-0675">Receptor</keyword>
<keyword id="KW-0732">Signal</keyword>
<keyword id="KW-0798">TonB box</keyword>
<keyword id="KW-0812">Transmembrane</keyword>
<keyword id="KW-1134">Transmembrane beta strand</keyword>
<keyword id="KW-0813">Transport</keyword>